<sequence>MKKQHDTIIVLDFGSQYNQLIARRIREFGVYSELHPHTITAEEIKAMNPKGIIFSGGPNSVYGEGALHCDEKIFELGLPIFGICYGMQLMTQHFGGKVERANHREYGKAVLKVENESKLYANLPEEQVVWMSHGDLVTGLPEGFVVDATSESCPIAGMSNEGENLYGVQFHPEVRHSEHGNDLIKNFVFGVCGCSEGWNMENFIEVELEKIRETVGDKKVLCALSGGVDSSVVAVLIHKAIGDQLTCIFVDHGLLRKDEAEGVMKTFSEGFHMNVIKVDAQERFMNKLKGVEDPEQKRKIIGNEFIYVFDDEASKLQGMDFLAQGTLYTDIVESGTATAQTIKSHHNVGGLPEDMQFKLIEPLNTLFKDEVRVLGSELGIPDEIVWRQPFPGPGLGIRVLGEITEEKLEIVRESDAILREEIIKAGLDREVWQYFTALPGMRSVGVMGDERTYDYTVGIRAVTSIDGMTADWARIPWDVLEKISVRIVNEVKHVNRIVYDITSKPPATIEWE</sequence>
<evidence type="ECO:0000255" key="1">
    <source>
        <dbReference type="HAMAP-Rule" id="MF_00344"/>
    </source>
</evidence>
<protein>
    <recommendedName>
        <fullName evidence="1">GMP synthase [glutamine-hydrolyzing]</fullName>
        <ecNumber evidence="1">6.3.5.2</ecNumber>
    </recommendedName>
    <alternativeName>
        <fullName evidence="1">GMP synthetase</fullName>
    </alternativeName>
    <alternativeName>
        <fullName evidence="1">Glutamine amidotransferase</fullName>
    </alternativeName>
</protein>
<comment type="function">
    <text evidence="1">Catalyzes the synthesis of GMP from XMP.</text>
</comment>
<comment type="catalytic activity">
    <reaction evidence="1">
        <text>XMP + L-glutamine + ATP + H2O = GMP + L-glutamate + AMP + diphosphate + 2 H(+)</text>
        <dbReference type="Rhea" id="RHEA:11680"/>
        <dbReference type="ChEBI" id="CHEBI:15377"/>
        <dbReference type="ChEBI" id="CHEBI:15378"/>
        <dbReference type="ChEBI" id="CHEBI:29985"/>
        <dbReference type="ChEBI" id="CHEBI:30616"/>
        <dbReference type="ChEBI" id="CHEBI:33019"/>
        <dbReference type="ChEBI" id="CHEBI:57464"/>
        <dbReference type="ChEBI" id="CHEBI:58115"/>
        <dbReference type="ChEBI" id="CHEBI:58359"/>
        <dbReference type="ChEBI" id="CHEBI:456215"/>
        <dbReference type="EC" id="6.3.5.2"/>
    </reaction>
</comment>
<comment type="pathway">
    <text evidence="1">Purine metabolism; GMP biosynthesis; GMP from XMP (L-Gln route): step 1/1.</text>
</comment>
<comment type="subunit">
    <text evidence="1">Homodimer.</text>
</comment>
<proteinExistence type="inferred from homology"/>
<gene>
    <name evidence="1" type="primary">guaA</name>
    <name type="ordered locus">BcerKBAB4_0247</name>
</gene>
<reference key="1">
    <citation type="journal article" date="2008" name="Chem. Biol. Interact.">
        <title>Extending the Bacillus cereus group genomics to putative food-borne pathogens of different toxicity.</title>
        <authorList>
            <person name="Lapidus A."/>
            <person name="Goltsman E."/>
            <person name="Auger S."/>
            <person name="Galleron N."/>
            <person name="Segurens B."/>
            <person name="Dossat C."/>
            <person name="Land M.L."/>
            <person name="Broussolle V."/>
            <person name="Brillard J."/>
            <person name="Guinebretiere M.-H."/>
            <person name="Sanchis V."/>
            <person name="Nguen-the C."/>
            <person name="Lereclus D."/>
            <person name="Richardson P."/>
            <person name="Wincker P."/>
            <person name="Weissenbach J."/>
            <person name="Ehrlich S.D."/>
            <person name="Sorokin A."/>
        </authorList>
    </citation>
    <scope>NUCLEOTIDE SEQUENCE [LARGE SCALE GENOMIC DNA]</scope>
    <source>
        <strain>KBAB4</strain>
    </source>
</reference>
<feature type="chain" id="PRO_1000120220" description="GMP synthase [glutamine-hydrolyzing]">
    <location>
        <begin position="1"/>
        <end position="512"/>
    </location>
</feature>
<feature type="domain" description="Glutamine amidotransferase type-1" evidence="1">
    <location>
        <begin position="7"/>
        <end position="197"/>
    </location>
</feature>
<feature type="domain" description="GMPS ATP-PPase" evidence="1">
    <location>
        <begin position="198"/>
        <end position="387"/>
    </location>
</feature>
<feature type="active site" description="Nucleophile" evidence="1">
    <location>
        <position position="84"/>
    </location>
</feature>
<feature type="active site" evidence="1">
    <location>
        <position position="171"/>
    </location>
</feature>
<feature type="active site" evidence="1">
    <location>
        <position position="173"/>
    </location>
</feature>
<feature type="binding site" evidence="1">
    <location>
        <begin position="225"/>
        <end position="231"/>
    </location>
    <ligand>
        <name>ATP</name>
        <dbReference type="ChEBI" id="CHEBI:30616"/>
    </ligand>
</feature>
<organism>
    <name type="scientific">Bacillus mycoides (strain KBAB4)</name>
    <name type="common">Bacillus weihenstephanensis</name>
    <dbReference type="NCBI Taxonomy" id="315730"/>
    <lineage>
        <taxon>Bacteria</taxon>
        <taxon>Bacillati</taxon>
        <taxon>Bacillota</taxon>
        <taxon>Bacilli</taxon>
        <taxon>Bacillales</taxon>
        <taxon>Bacillaceae</taxon>
        <taxon>Bacillus</taxon>
        <taxon>Bacillus cereus group</taxon>
    </lineage>
</organism>
<accession>A9VQG9</accession>
<name>GUAA_BACMK</name>
<keyword id="KW-0067">ATP-binding</keyword>
<keyword id="KW-0315">Glutamine amidotransferase</keyword>
<keyword id="KW-0332">GMP biosynthesis</keyword>
<keyword id="KW-0436">Ligase</keyword>
<keyword id="KW-0547">Nucleotide-binding</keyword>
<keyword id="KW-0658">Purine biosynthesis</keyword>
<dbReference type="EC" id="6.3.5.2" evidence="1"/>
<dbReference type="EMBL" id="CP000903">
    <property type="protein sequence ID" value="ABY41515.1"/>
    <property type="molecule type" value="Genomic_DNA"/>
</dbReference>
<dbReference type="SMR" id="A9VQG9"/>
<dbReference type="KEGG" id="bwe:BcerKBAB4_0247"/>
<dbReference type="eggNOG" id="COG0518">
    <property type="taxonomic scope" value="Bacteria"/>
</dbReference>
<dbReference type="eggNOG" id="COG0519">
    <property type="taxonomic scope" value="Bacteria"/>
</dbReference>
<dbReference type="HOGENOM" id="CLU_014340_0_5_9"/>
<dbReference type="UniPathway" id="UPA00189">
    <property type="reaction ID" value="UER00296"/>
</dbReference>
<dbReference type="Proteomes" id="UP000002154">
    <property type="component" value="Chromosome"/>
</dbReference>
<dbReference type="GO" id="GO:0005829">
    <property type="term" value="C:cytosol"/>
    <property type="evidence" value="ECO:0007669"/>
    <property type="project" value="TreeGrafter"/>
</dbReference>
<dbReference type="GO" id="GO:0005524">
    <property type="term" value="F:ATP binding"/>
    <property type="evidence" value="ECO:0007669"/>
    <property type="project" value="UniProtKB-UniRule"/>
</dbReference>
<dbReference type="GO" id="GO:0003921">
    <property type="term" value="F:GMP synthase activity"/>
    <property type="evidence" value="ECO:0007669"/>
    <property type="project" value="InterPro"/>
</dbReference>
<dbReference type="CDD" id="cd01742">
    <property type="entry name" value="GATase1_GMP_Synthase"/>
    <property type="match status" value="1"/>
</dbReference>
<dbReference type="CDD" id="cd01997">
    <property type="entry name" value="GMP_synthase_C"/>
    <property type="match status" value="1"/>
</dbReference>
<dbReference type="FunFam" id="3.30.300.10:FF:000002">
    <property type="entry name" value="GMP synthase [glutamine-hydrolyzing]"/>
    <property type="match status" value="1"/>
</dbReference>
<dbReference type="FunFam" id="3.40.50.620:FF:000001">
    <property type="entry name" value="GMP synthase [glutamine-hydrolyzing]"/>
    <property type="match status" value="1"/>
</dbReference>
<dbReference type="FunFam" id="3.40.50.880:FF:000001">
    <property type="entry name" value="GMP synthase [glutamine-hydrolyzing]"/>
    <property type="match status" value="1"/>
</dbReference>
<dbReference type="Gene3D" id="3.30.300.10">
    <property type="match status" value="1"/>
</dbReference>
<dbReference type="Gene3D" id="3.40.50.880">
    <property type="match status" value="1"/>
</dbReference>
<dbReference type="Gene3D" id="3.40.50.620">
    <property type="entry name" value="HUPs"/>
    <property type="match status" value="1"/>
</dbReference>
<dbReference type="HAMAP" id="MF_00344">
    <property type="entry name" value="GMP_synthase"/>
    <property type="match status" value="1"/>
</dbReference>
<dbReference type="InterPro" id="IPR029062">
    <property type="entry name" value="Class_I_gatase-like"/>
</dbReference>
<dbReference type="InterPro" id="IPR017926">
    <property type="entry name" value="GATASE"/>
</dbReference>
<dbReference type="InterPro" id="IPR001674">
    <property type="entry name" value="GMP_synth_C"/>
</dbReference>
<dbReference type="InterPro" id="IPR004739">
    <property type="entry name" value="GMP_synth_GATase"/>
</dbReference>
<dbReference type="InterPro" id="IPR022955">
    <property type="entry name" value="GMP_synthase"/>
</dbReference>
<dbReference type="InterPro" id="IPR025777">
    <property type="entry name" value="GMPS_ATP_PPase_dom"/>
</dbReference>
<dbReference type="InterPro" id="IPR022310">
    <property type="entry name" value="NAD/GMP_synthase"/>
</dbReference>
<dbReference type="InterPro" id="IPR014729">
    <property type="entry name" value="Rossmann-like_a/b/a_fold"/>
</dbReference>
<dbReference type="NCBIfam" id="TIGR00884">
    <property type="entry name" value="guaA_Cterm"/>
    <property type="match status" value="1"/>
</dbReference>
<dbReference type="NCBIfam" id="TIGR00888">
    <property type="entry name" value="guaA_Nterm"/>
    <property type="match status" value="1"/>
</dbReference>
<dbReference type="NCBIfam" id="NF000848">
    <property type="entry name" value="PRK00074.1"/>
    <property type="match status" value="1"/>
</dbReference>
<dbReference type="PANTHER" id="PTHR11922:SF2">
    <property type="entry name" value="GMP SYNTHASE [GLUTAMINE-HYDROLYZING]"/>
    <property type="match status" value="1"/>
</dbReference>
<dbReference type="PANTHER" id="PTHR11922">
    <property type="entry name" value="GMP SYNTHASE-RELATED"/>
    <property type="match status" value="1"/>
</dbReference>
<dbReference type="Pfam" id="PF00117">
    <property type="entry name" value="GATase"/>
    <property type="match status" value="1"/>
</dbReference>
<dbReference type="Pfam" id="PF00958">
    <property type="entry name" value="GMP_synt_C"/>
    <property type="match status" value="1"/>
</dbReference>
<dbReference type="Pfam" id="PF02540">
    <property type="entry name" value="NAD_synthase"/>
    <property type="match status" value="1"/>
</dbReference>
<dbReference type="PRINTS" id="PR00097">
    <property type="entry name" value="ANTSNTHASEII"/>
</dbReference>
<dbReference type="PRINTS" id="PR00099">
    <property type="entry name" value="CPSGATASE"/>
</dbReference>
<dbReference type="PRINTS" id="PR00096">
    <property type="entry name" value="GATASE"/>
</dbReference>
<dbReference type="SUPFAM" id="SSF52402">
    <property type="entry name" value="Adenine nucleotide alpha hydrolases-like"/>
    <property type="match status" value="1"/>
</dbReference>
<dbReference type="SUPFAM" id="SSF52317">
    <property type="entry name" value="Class I glutamine amidotransferase-like"/>
    <property type="match status" value="1"/>
</dbReference>
<dbReference type="SUPFAM" id="SSF54810">
    <property type="entry name" value="GMP synthetase C-terminal dimerisation domain"/>
    <property type="match status" value="1"/>
</dbReference>
<dbReference type="PROSITE" id="PS51273">
    <property type="entry name" value="GATASE_TYPE_1"/>
    <property type="match status" value="1"/>
</dbReference>
<dbReference type="PROSITE" id="PS51553">
    <property type="entry name" value="GMPS_ATP_PPASE"/>
    <property type="match status" value="1"/>
</dbReference>